<evidence type="ECO:0000255" key="1">
    <source>
        <dbReference type="HAMAP-Rule" id="MF_00382"/>
    </source>
</evidence>
<evidence type="ECO:0000305" key="2"/>
<proteinExistence type="inferred from homology"/>
<name>RL20_BRUMB</name>
<comment type="function">
    <text evidence="1">Binds directly to 23S ribosomal RNA and is necessary for the in vitro assembly process of the 50S ribosomal subunit. It is not involved in the protein synthesizing functions of that subunit.</text>
</comment>
<comment type="similarity">
    <text evidence="1">Belongs to the bacterial ribosomal protein bL20 family.</text>
</comment>
<protein>
    <recommendedName>
        <fullName evidence="1">Large ribosomal subunit protein bL20</fullName>
    </recommendedName>
    <alternativeName>
        <fullName evidence="2">50S ribosomal protein L20</fullName>
    </alternativeName>
</protein>
<feature type="chain" id="PRO_1000193942" description="Large ribosomal subunit protein bL20">
    <location>
        <begin position="1"/>
        <end position="134"/>
    </location>
</feature>
<organism>
    <name type="scientific">Brucella melitensis biotype 2 (strain ATCC 23457)</name>
    <dbReference type="NCBI Taxonomy" id="546272"/>
    <lineage>
        <taxon>Bacteria</taxon>
        <taxon>Pseudomonadati</taxon>
        <taxon>Pseudomonadota</taxon>
        <taxon>Alphaproteobacteria</taxon>
        <taxon>Hyphomicrobiales</taxon>
        <taxon>Brucellaceae</taxon>
        <taxon>Brucella/Ochrobactrum group</taxon>
        <taxon>Brucella</taxon>
    </lineage>
</organism>
<keyword id="KW-0687">Ribonucleoprotein</keyword>
<keyword id="KW-0689">Ribosomal protein</keyword>
<keyword id="KW-0694">RNA-binding</keyword>
<keyword id="KW-0699">rRNA-binding</keyword>
<accession>C0RG04</accession>
<reference key="1">
    <citation type="submission" date="2009-03" db="EMBL/GenBank/DDBJ databases">
        <title>Brucella melitensis ATCC 23457 whole genome shotgun sequencing project.</title>
        <authorList>
            <person name="Setubal J.C."/>
            <person name="Boyle S."/>
            <person name="Crasta O.R."/>
            <person name="Gillespie J.J."/>
            <person name="Kenyon R.W."/>
            <person name="Lu J."/>
            <person name="Mane S."/>
            <person name="Nagrani S."/>
            <person name="Shallom J.M."/>
            <person name="Shallom S."/>
            <person name="Shukla M."/>
            <person name="Snyder E.E."/>
            <person name="Sobral B.W."/>
            <person name="Wattam A.R."/>
            <person name="Will R."/>
            <person name="Williams K."/>
            <person name="Yoo H."/>
            <person name="Munk C."/>
            <person name="Tapia R."/>
            <person name="Han C."/>
            <person name="Detter J.C."/>
            <person name="Bruce D."/>
            <person name="Brettin T.S."/>
        </authorList>
    </citation>
    <scope>NUCLEOTIDE SEQUENCE [LARGE SCALE GENOMIC DNA]</scope>
    <source>
        <strain>ATCC 23457</strain>
    </source>
</reference>
<sequence length="134" mass="15095">MARVKRGVTAHAKHKKVLDQAAGFRGRRKNTIRTAKAAVDRSKQYAYRDRKNRKRSFRALWIQRINAAVREQGLTYGRFIDGLAKAGIEIDRKVLSDIAIHEPEAFAALVASAKKALEYLKNTSMPNAFEGAVR</sequence>
<dbReference type="EMBL" id="CP001488">
    <property type="protein sequence ID" value="ACO01826.1"/>
    <property type="molecule type" value="Genomic_DNA"/>
</dbReference>
<dbReference type="RefSeq" id="WP_002965185.1">
    <property type="nucleotide sequence ID" value="NC_012441.1"/>
</dbReference>
<dbReference type="SMR" id="C0RG04"/>
<dbReference type="GeneID" id="97534622"/>
<dbReference type="KEGG" id="bmi:BMEA_A2180"/>
<dbReference type="HOGENOM" id="CLU_123265_0_1_5"/>
<dbReference type="Proteomes" id="UP000001748">
    <property type="component" value="Chromosome I"/>
</dbReference>
<dbReference type="GO" id="GO:1990904">
    <property type="term" value="C:ribonucleoprotein complex"/>
    <property type="evidence" value="ECO:0007669"/>
    <property type="project" value="UniProtKB-KW"/>
</dbReference>
<dbReference type="GO" id="GO:0005840">
    <property type="term" value="C:ribosome"/>
    <property type="evidence" value="ECO:0007669"/>
    <property type="project" value="UniProtKB-KW"/>
</dbReference>
<dbReference type="GO" id="GO:0019843">
    <property type="term" value="F:rRNA binding"/>
    <property type="evidence" value="ECO:0007669"/>
    <property type="project" value="UniProtKB-UniRule"/>
</dbReference>
<dbReference type="GO" id="GO:0003735">
    <property type="term" value="F:structural constituent of ribosome"/>
    <property type="evidence" value="ECO:0007669"/>
    <property type="project" value="InterPro"/>
</dbReference>
<dbReference type="GO" id="GO:0000027">
    <property type="term" value="P:ribosomal large subunit assembly"/>
    <property type="evidence" value="ECO:0007669"/>
    <property type="project" value="UniProtKB-UniRule"/>
</dbReference>
<dbReference type="GO" id="GO:0006412">
    <property type="term" value="P:translation"/>
    <property type="evidence" value="ECO:0007669"/>
    <property type="project" value="InterPro"/>
</dbReference>
<dbReference type="CDD" id="cd07026">
    <property type="entry name" value="Ribosomal_L20"/>
    <property type="match status" value="1"/>
</dbReference>
<dbReference type="FunFam" id="1.10.1900.20:FF:000001">
    <property type="entry name" value="50S ribosomal protein L20"/>
    <property type="match status" value="1"/>
</dbReference>
<dbReference type="Gene3D" id="6.10.160.10">
    <property type="match status" value="1"/>
</dbReference>
<dbReference type="Gene3D" id="1.10.1900.20">
    <property type="entry name" value="Ribosomal protein L20"/>
    <property type="match status" value="1"/>
</dbReference>
<dbReference type="HAMAP" id="MF_00382">
    <property type="entry name" value="Ribosomal_bL20"/>
    <property type="match status" value="1"/>
</dbReference>
<dbReference type="InterPro" id="IPR005813">
    <property type="entry name" value="Ribosomal_bL20"/>
</dbReference>
<dbReference type="InterPro" id="IPR049946">
    <property type="entry name" value="RIBOSOMAL_L20_CS"/>
</dbReference>
<dbReference type="InterPro" id="IPR035566">
    <property type="entry name" value="Ribosomal_protein_bL20_C"/>
</dbReference>
<dbReference type="NCBIfam" id="TIGR01032">
    <property type="entry name" value="rplT_bact"/>
    <property type="match status" value="1"/>
</dbReference>
<dbReference type="PANTHER" id="PTHR10986">
    <property type="entry name" value="39S RIBOSOMAL PROTEIN L20"/>
    <property type="match status" value="1"/>
</dbReference>
<dbReference type="Pfam" id="PF00453">
    <property type="entry name" value="Ribosomal_L20"/>
    <property type="match status" value="1"/>
</dbReference>
<dbReference type="PRINTS" id="PR00062">
    <property type="entry name" value="RIBOSOMALL20"/>
</dbReference>
<dbReference type="SUPFAM" id="SSF74731">
    <property type="entry name" value="Ribosomal protein L20"/>
    <property type="match status" value="1"/>
</dbReference>
<dbReference type="PROSITE" id="PS00937">
    <property type="entry name" value="RIBOSOMAL_L20"/>
    <property type="match status" value="1"/>
</dbReference>
<gene>
    <name evidence="1" type="primary">rplT</name>
    <name type="ordered locus">BMEA_A2180</name>
</gene>